<name>E434_ADE12</name>
<comment type="function">
    <text evidence="1">Plays a major role to prevent cellular inhibition of viral genome replication by nuclear bodies. Assembles an SCF-like E3 ubiquitin ligase complex based on the cellular proteins ELOB, ELOC, CUL5 and RBX1, in cooperation with viral E1B-55K. This viral RING-type ligase ubiquitinates cellular substrates prior to proteasomal degradation: p53/TP53, LIG4, MRE11-RAD50-NBS1 (MRN) complex, ITGA3, DAXX and BLM.</text>
</comment>
<comment type="subunit">
    <text evidence="1">Interacts with E1B-55k.</text>
</comment>
<comment type="subcellular location">
    <subcellularLocation>
        <location evidence="1">Host nucleus</location>
    </subcellularLocation>
    <subcellularLocation>
        <location evidence="1">Host cytoplasm</location>
    </subcellularLocation>
</comment>
<comment type="similarity">
    <text evidence="2">Belongs to the adenoviridae E4 30 to 34 kDa protein family.</text>
</comment>
<dbReference type="EMBL" id="X73487">
    <property type="protein sequence ID" value="CAA51901.1"/>
    <property type="molecule type" value="Genomic_DNA"/>
</dbReference>
<dbReference type="EMBL" id="X51800">
    <property type="protein sequence ID" value="CAB57854.1"/>
    <property type="molecule type" value="Genomic_DNA"/>
</dbReference>
<dbReference type="PIR" id="S10867">
    <property type="entry name" value="S10867"/>
</dbReference>
<dbReference type="RefSeq" id="NP_040934.1">
    <property type="nucleotide sequence ID" value="NC_001460.1"/>
</dbReference>
<dbReference type="DNASU" id="1460865"/>
<dbReference type="GeneID" id="1460865"/>
<dbReference type="KEGG" id="vg:1460865"/>
<dbReference type="Proteomes" id="UP000004993">
    <property type="component" value="Genome"/>
</dbReference>
<dbReference type="GO" id="GO:0030430">
    <property type="term" value="C:host cell cytoplasm"/>
    <property type="evidence" value="ECO:0007669"/>
    <property type="project" value="UniProtKB-SubCell"/>
</dbReference>
<dbReference type="GO" id="GO:0042025">
    <property type="term" value="C:host cell nucleus"/>
    <property type="evidence" value="ECO:0007669"/>
    <property type="project" value="UniProtKB-SubCell"/>
</dbReference>
<dbReference type="InterPro" id="IPR007615">
    <property type="entry name" value="Adenovirus_E4_30/34"/>
</dbReference>
<dbReference type="Pfam" id="PF04528">
    <property type="entry name" value="Adeno_E4_34"/>
    <property type="match status" value="1"/>
</dbReference>
<reference key="1">
    <citation type="journal article" date="1994" name="J. Virol.">
        <title>Nucleotide sequence of human adenovirus type 12 DNA: comparative functional analysis.</title>
        <authorList>
            <person name="Sprengel J."/>
            <person name="Schmitz B."/>
            <person name="Heuss-Neitzel D."/>
            <person name="Zock C."/>
            <person name="Doerfler W."/>
        </authorList>
    </citation>
    <scope>NUCLEOTIDE SEQUENCE [LARGE SCALE GENOMIC DNA]</scope>
</reference>
<reference key="2">
    <citation type="journal article" date="1990" name="Nucleic Acids Res.">
        <title>Nucleotide sequence of the right 10% of adenovirus type 12 DNA encoding the entire region E4.</title>
        <authorList>
            <person name="Hogenkamp T."/>
            <person name="Esche H."/>
        </authorList>
    </citation>
    <scope>NUCLEOTIDE SEQUENCE [GENOMIC DNA]</scope>
</reference>
<keyword id="KW-0244">Early protein</keyword>
<keyword id="KW-1035">Host cytoplasm</keyword>
<keyword id="KW-1048">Host nucleus</keyword>
<keyword id="KW-1185">Reference proteome</keyword>
<feature type="chain" id="PRO_0000221778" description="Early E4 34 kDa protein">
    <location>
        <begin position="1"/>
        <end position="291"/>
    </location>
</feature>
<feature type="sequence conflict" description="In Ref. 2; CAB57854." evidence="2" ref="2">
    <original>CA</original>
    <variation>WP</variation>
    <location>
        <begin position="228"/>
        <end position="229"/>
    </location>
</feature>
<evidence type="ECO:0000250" key="1">
    <source>
        <dbReference type="UniProtKB" id="P03239"/>
    </source>
</evidence>
<evidence type="ECO:0000305" key="2"/>
<protein>
    <recommendedName>
        <fullName>Early E4 34 kDa protein</fullName>
    </recommendedName>
</protein>
<organismHost>
    <name type="scientific">Homo sapiens</name>
    <name type="common">Human</name>
    <dbReference type="NCBI Taxonomy" id="9606"/>
</organismHost>
<accession>P36710</accession>
<sequence>MQRDRRYRYRLAPYNKYQLPPCEEQSKATLSTSENSLWPECNSLTLHNVSEVRGIPSCVGFTVLQEWPIPWDMILTDYEMFILKKYMSVCMCCATINVEVTQLLHGHERWLIHCHCQRPGSLQCMSAGMLLGRWFKMAVYGALINKRCFWYREVVNHLMPKEVMYVGSTFVRGRHLIYFKIMYDGHAWLALEKVSFGWSAFNYGILNNMLVLCCDYCKDLSEIRMRCCARRTRLLMLKVVQVIAENTVRPLKHSRHERYRQQLLKGLIMHHRAILFGDYNQRENPWAADGH</sequence>
<proteinExistence type="inferred from homology"/>
<organism>
    <name type="scientific">Human adenovirus A serotype 12</name>
    <name type="common">HAdV-12</name>
    <name type="synonym">Human adenovirus 12</name>
    <dbReference type="NCBI Taxonomy" id="28282"/>
    <lineage>
        <taxon>Viruses</taxon>
        <taxon>Varidnaviria</taxon>
        <taxon>Bamfordvirae</taxon>
        <taxon>Preplasmiviricota</taxon>
        <taxon>Tectiliviricetes</taxon>
        <taxon>Rowavirales</taxon>
        <taxon>Adenoviridae</taxon>
        <taxon>Mastadenovirus</taxon>
        <taxon>Human mastadenovirus A</taxon>
    </lineage>
</organism>